<feature type="chain" id="PRO_0000371296" description="Reticulon-like protein B15">
    <location>
        <begin position="1"/>
        <end position="191"/>
    </location>
</feature>
<feature type="transmembrane region" description="Helical" evidence="2">
    <location>
        <begin position="23"/>
        <end position="43"/>
    </location>
</feature>
<feature type="transmembrane region" description="Helical" evidence="2">
    <location>
        <begin position="47"/>
        <end position="67"/>
    </location>
</feature>
<feature type="transmembrane region" description="Helical" evidence="2">
    <location>
        <begin position="122"/>
        <end position="142"/>
    </location>
</feature>
<feature type="domain" description="Reticulon" evidence="3">
    <location>
        <begin position="13"/>
        <end position="191"/>
    </location>
</feature>
<accession>Q9ZU43</accession>
<accession>F4IM98</accession>
<keyword id="KW-0256">Endoplasmic reticulum</keyword>
<keyword id="KW-0472">Membrane</keyword>
<keyword id="KW-1185">Reference proteome</keyword>
<keyword id="KW-0812">Transmembrane</keyword>
<keyword id="KW-1133">Transmembrane helix</keyword>
<name>RTNLO_ARATH</name>
<comment type="subcellular location">
    <subcellularLocation>
        <location evidence="1">Endoplasmic reticulum membrane</location>
        <topology evidence="1">Multi-pass membrane protein</topology>
    </subcellularLocation>
</comment>
<comment type="sequence caution" evidence="4">
    <conflict type="erroneous gene model prediction">
        <sequence resource="EMBL-CDS" id="AAD14524"/>
    </conflict>
</comment>
<proteinExistence type="evidence at transcript level"/>
<reference key="1">
    <citation type="journal article" date="1999" name="Nature">
        <title>Sequence and analysis of chromosome 2 of the plant Arabidopsis thaliana.</title>
        <authorList>
            <person name="Lin X."/>
            <person name="Kaul S."/>
            <person name="Rounsley S.D."/>
            <person name="Shea T.P."/>
            <person name="Benito M.-I."/>
            <person name="Town C.D."/>
            <person name="Fujii C.Y."/>
            <person name="Mason T.M."/>
            <person name="Bowman C.L."/>
            <person name="Barnstead M.E."/>
            <person name="Feldblyum T.V."/>
            <person name="Buell C.R."/>
            <person name="Ketchum K.A."/>
            <person name="Lee J.J."/>
            <person name="Ronning C.M."/>
            <person name="Koo H.L."/>
            <person name="Moffat K.S."/>
            <person name="Cronin L.A."/>
            <person name="Shen M."/>
            <person name="Pai G."/>
            <person name="Van Aken S."/>
            <person name="Umayam L."/>
            <person name="Tallon L.J."/>
            <person name="Gill J.E."/>
            <person name="Adams M.D."/>
            <person name="Carrera A.J."/>
            <person name="Creasy T.H."/>
            <person name="Goodman H.M."/>
            <person name="Somerville C.R."/>
            <person name="Copenhaver G.P."/>
            <person name="Preuss D."/>
            <person name="Nierman W.C."/>
            <person name="White O."/>
            <person name="Eisen J.A."/>
            <person name="Salzberg S.L."/>
            <person name="Fraser C.M."/>
            <person name="Venter J.C."/>
        </authorList>
    </citation>
    <scope>NUCLEOTIDE SEQUENCE [LARGE SCALE GENOMIC DNA]</scope>
    <source>
        <strain>cv. Columbia</strain>
    </source>
</reference>
<reference key="2">
    <citation type="journal article" date="2017" name="Plant J.">
        <title>Araport11: a complete reannotation of the Arabidopsis thaliana reference genome.</title>
        <authorList>
            <person name="Cheng C.Y."/>
            <person name="Krishnakumar V."/>
            <person name="Chan A.P."/>
            <person name="Thibaud-Nissen F."/>
            <person name="Schobel S."/>
            <person name="Town C.D."/>
        </authorList>
    </citation>
    <scope>GENOME REANNOTATION</scope>
    <source>
        <strain>cv. Columbia</strain>
    </source>
</reference>
<reference key="3">
    <citation type="journal article" date="2005" name="Plant Physiol.">
        <title>Analysis of the cDNAs of hypothetical genes on Arabidopsis chromosome 2 reveals numerous transcript variants.</title>
        <authorList>
            <person name="Xiao Y.-L."/>
            <person name="Smith S.R."/>
            <person name="Ishmael N."/>
            <person name="Redman J.C."/>
            <person name="Kumar N."/>
            <person name="Monaghan E.L."/>
            <person name="Ayele M."/>
            <person name="Haas B.J."/>
            <person name="Wu H.C."/>
            <person name="Town C.D."/>
        </authorList>
    </citation>
    <scope>NUCLEOTIDE SEQUENCE [LARGE SCALE MRNA] OF 59-191</scope>
    <source>
        <strain>cv. Columbia</strain>
    </source>
</reference>
<reference key="4">
    <citation type="journal article" date="2007" name="FEBS Lett.">
        <title>Reticulon-like proteins in Arabidopsis thaliana: structural organization and ER localization.</title>
        <authorList>
            <person name="Nziengui H."/>
            <person name="Bouhidel K."/>
            <person name="Pillon D."/>
            <person name="Der C."/>
            <person name="Marty F."/>
            <person name="Schoefs B."/>
        </authorList>
    </citation>
    <scope>GENE FAMILY</scope>
    <scope>NOMENCLATURE</scope>
</reference>
<protein>
    <recommendedName>
        <fullName>Reticulon-like protein B15</fullName>
        <shortName>AtRTNLB15</shortName>
    </recommendedName>
</protein>
<evidence type="ECO:0000250" key="1"/>
<evidence type="ECO:0000255" key="2"/>
<evidence type="ECO:0000255" key="3">
    <source>
        <dbReference type="PROSITE-ProRule" id="PRU00170"/>
    </source>
</evidence>
<evidence type="ECO:0000305" key="4"/>
<organism>
    <name type="scientific">Arabidopsis thaliana</name>
    <name type="common">Mouse-ear cress</name>
    <dbReference type="NCBI Taxonomy" id="3702"/>
    <lineage>
        <taxon>Eukaryota</taxon>
        <taxon>Viridiplantae</taxon>
        <taxon>Streptophyta</taxon>
        <taxon>Embryophyta</taxon>
        <taxon>Tracheophyta</taxon>
        <taxon>Spermatophyta</taxon>
        <taxon>Magnoliopsida</taxon>
        <taxon>eudicotyledons</taxon>
        <taxon>Gunneridae</taxon>
        <taxon>Pentapetalae</taxon>
        <taxon>rosids</taxon>
        <taxon>malvids</taxon>
        <taxon>Brassicales</taxon>
        <taxon>Brassicaceae</taxon>
        <taxon>Camelineae</taxon>
        <taxon>Arabidopsis</taxon>
    </lineage>
</organism>
<sequence length="191" mass="21859">MSLVDQILGDGAVADLCLWKDKINSGITLVMATLFWFLLEFMEARLVPLLCSILLLLMLILFLWAKFGEVFFTRRPPTPEELNQPDSPLKALFSMMEGHLLMLYEIAYGKDNKTFLKTILYVAIIYNIGSYISLLTILYICLVCSMTIPVVYMQFQELIDSFMGKVSEEKNNLLEVFKQVVSKIPRAPKVE</sequence>
<dbReference type="EMBL" id="AC006200">
    <property type="protein sequence ID" value="AAD14524.1"/>
    <property type="status" value="ALT_SEQ"/>
    <property type="molecule type" value="Genomic_DNA"/>
</dbReference>
<dbReference type="EMBL" id="CP002685">
    <property type="status" value="NOT_ANNOTATED_CDS"/>
    <property type="molecule type" value="Genomic_DNA"/>
</dbReference>
<dbReference type="EMBL" id="AY500325">
    <property type="status" value="NOT_ANNOTATED_CDS"/>
    <property type="molecule type" value="mRNA"/>
</dbReference>
<dbReference type="PIR" id="C84422">
    <property type="entry name" value="C84422"/>
</dbReference>
<dbReference type="BioGRID" id="55">
    <property type="interactions" value="1"/>
</dbReference>
<dbReference type="FunCoup" id="Q9ZU43">
    <property type="interactions" value="83"/>
</dbReference>
<dbReference type="STRING" id="3702.Q9ZU43"/>
<dbReference type="PaxDb" id="3702-AT2G01240.1"/>
<dbReference type="PeptideAtlas" id="Q9ZU43"/>
<dbReference type="Araport" id="AT2G01240"/>
<dbReference type="TAIR" id="AT2G01240"/>
<dbReference type="eggNOG" id="KOG1792">
    <property type="taxonomic scope" value="Eukaryota"/>
</dbReference>
<dbReference type="InParanoid" id="Q9ZU43"/>
<dbReference type="PhylomeDB" id="Q9ZU43"/>
<dbReference type="PRO" id="PR:Q9ZU43"/>
<dbReference type="Proteomes" id="UP000006548">
    <property type="component" value="Chromosome 2"/>
</dbReference>
<dbReference type="ExpressionAtlas" id="Q9ZU43">
    <property type="expression patterns" value="baseline and differential"/>
</dbReference>
<dbReference type="GO" id="GO:0005789">
    <property type="term" value="C:endoplasmic reticulum membrane"/>
    <property type="evidence" value="ECO:0007669"/>
    <property type="project" value="UniProtKB-SubCell"/>
</dbReference>
<dbReference type="GO" id="GO:0009617">
    <property type="term" value="P:response to bacterium"/>
    <property type="evidence" value="ECO:0007669"/>
    <property type="project" value="InterPro"/>
</dbReference>
<dbReference type="InterPro" id="IPR003388">
    <property type="entry name" value="Reticulon"/>
</dbReference>
<dbReference type="InterPro" id="IPR045064">
    <property type="entry name" value="Reticulon-like"/>
</dbReference>
<dbReference type="PANTHER" id="PTHR10994">
    <property type="entry name" value="RETICULON"/>
    <property type="match status" value="1"/>
</dbReference>
<dbReference type="PANTHER" id="PTHR10994:SF177">
    <property type="entry name" value="RETICULON-LIKE PROTEIN B15"/>
    <property type="match status" value="1"/>
</dbReference>
<dbReference type="Pfam" id="PF02453">
    <property type="entry name" value="Reticulon"/>
    <property type="match status" value="1"/>
</dbReference>
<dbReference type="PROSITE" id="PS50845">
    <property type="entry name" value="RETICULON"/>
    <property type="match status" value="1"/>
</dbReference>
<gene>
    <name type="primary">RTNLB15</name>
    <name type="ordered locus">At2g01240</name>
    <name type="ORF">F10A8.12</name>
</gene>